<feature type="chain" id="PRO_0000113026" description="Ornithine carbamoyltransferase 1, catabolic">
    <location>
        <begin position="1"/>
        <end position="332"/>
    </location>
</feature>
<feature type="binding site" evidence="2">
    <location>
        <begin position="56"/>
        <end position="59"/>
    </location>
    <ligand>
        <name>carbamoyl phosphate</name>
        <dbReference type="ChEBI" id="CHEBI:58228"/>
    </ligand>
</feature>
<feature type="binding site" evidence="2">
    <location>
        <position position="83"/>
    </location>
    <ligand>
        <name>carbamoyl phosphate</name>
        <dbReference type="ChEBI" id="CHEBI:58228"/>
    </ligand>
</feature>
<feature type="binding site" evidence="2">
    <location>
        <position position="107"/>
    </location>
    <ligand>
        <name>carbamoyl phosphate</name>
        <dbReference type="ChEBI" id="CHEBI:58228"/>
    </ligand>
</feature>
<feature type="binding site" evidence="2">
    <location>
        <begin position="134"/>
        <end position="137"/>
    </location>
    <ligand>
        <name>carbamoyl phosphate</name>
        <dbReference type="ChEBI" id="CHEBI:58228"/>
    </ligand>
</feature>
<feature type="binding site" evidence="2">
    <location>
        <position position="167"/>
    </location>
    <ligand>
        <name>L-ornithine</name>
        <dbReference type="ChEBI" id="CHEBI:46911"/>
    </ligand>
</feature>
<feature type="binding site" evidence="2">
    <location>
        <position position="231"/>
    </location>
    <ligand>
        <name>L-ornithine</name>
        <dbReference type="ChEBI" id="CHEBI:46911"/>
    </ligand>
</feature>
<feature type="binding site" evidence="2">
    <location>
        <begin position="235"/>
        <end position="236"/>
    </location>
    <ligand>
        <name>L-ornithine</name>
        <dbReference type="ChEBI" id="CHEBI:46911"/>
    </ligand>
</feature>
<feature type="binding site" evidence="2">
    <location>
        <begin position="273"/>
        <end position="274"/>
    </location>
    <ligand>
        <name>carbamoyl phosphate</name>
        <dbReference type="ChEBI" id="CHEBI:58228"/>
    </ligand>
</feature>
<feature type="binding site" evidence="2">
    <location>
        <position position="318"/>
    </location>
    <ligand>
        <name>carbamoyl phosphate</name>
        <dbReference type="ChEBI" id="CHEBI:58228"/>
    </ligand>
</feature>
<proteinExistence type="inferred from homology"/>
<dbReference type="EC" id="2.1.3.3"/>
<dbReference type="EMBL" id="AE009948">
    <property type="protein sequence ID" value="AAN00984.1"/>
    <property type="molecule type" value="Genomic_DNA"/>
</dbReference>
<dbReference type="RefSeq" id="NP_689111.1">
    <property type="nucleotide sequence ID" value="NC_004116.1"/>
</dbReference>
<dbReference type="SMR" id="P65604"/>
<dbReference type="STRING" id="208435.SAG2126"/>
<dbReference type="KEGG" id="sag:SAG2126"/>
<dbReference type="PATRIC" id="fig|208435.3.peg.2129"/>
<dbReference type="HOGENOM" id="CLU_043846_3_1_9"/>
<dbReference type="OrthoDB" id="9802587at2"/>
<dbReference type="UniPathway" id="UPA00254">
    <property type="reaction ID" value="UER00365"/>
</dbReference>
<dbReference type="Proteomes" id="UP000000821">
    <property type="component" value="Chromosome"/>
</dbReference>
<dbReference type="GO" id="GO:0005737">
    <property type="term" value="C:cytoplasm"/>
    <property type="evidence" value="ECO:0007669"/>
    <property type="project" value="UniProtKB-SubCell"/>
</dbReference>
<dbReference type="GO" id="GO:0016597">
    <property type="term" value="F:amino acid binding"/>
    <property type="evidence" value="ECO:0007669"/>
    <property type="project" value="InterPro"/>
</dbReference>
<dbReference type="GO" id="GO:0004585">
    <property type="term" value="F:ornithine carbamoyltransferase activity"/>
    <property type="evidence" value="ECO:0007669"/>
    <property type="project" value="UniProtKB-UniRule"/>
</dbReference>
<dbReference type="GO" id="GO:0042450">
    <property type="term" value="P:arginine biosynthetic process via ornithine"/>
    <property type="evidence" value="ECO:0007669"/>
    <property type="project" value="TreeGrafter"/>
</dbReference>
<dbReference type="GO" id="GO:0019547">
    <property type="term" value="P:arginine catabolic process to ornithine"/>
    <property type="evidence" value="ECO:0007669"/>
    <property type="project" value="UniProtKB-UniRule"/>
</dbReference>
<dbReference type="GO" id="GO:0019240">
    <property type="term" value="P:citrulline biosynthetic process"/>
    <property type="evidence" value="ECO:0007669"/>
    <property type="project" value="TreeGrafter"/>
</dbReference>
<dbReference type="Gene3D" id="3.40.50.1370">
    <property type="entry name" value="Aspartate/ornithine carbamoyltransferase"/>
    <property type="match status" value="2"/>
</dbReference>
<dbReference type="HAMAP" id="MF_01109">
    <property type="entry name" value="OTCase"/>
    <property type="match status" value="1"/>
</dbReference>
<dbReference type="InterPro" id="IPR006132">
    <property type="entry name" value="Asp/Orn_carbamoyltranf_P-bd"/>
</dbReference>
<dbReference type="InterPro" id="IPR006130">
    <property type="entry name" value="Asp/Orn_carbamoylTrfase"/>
</dbReference>
<dbReference type="InterPro" id="IPR036901">
    <property type="entry name" value="Asp/Orn_carbamoylTrfase_sf"/>
</dbReference>
<dbReference type="InterPro" id="IPR006131">
    <property type="entry name" value="Asp_carbamoyltransf_Asp/Orn-bd"/>
</dbReference>
<dbReference type="InterPro" id="IPR002292">
    <property type="entry name" value="Orn/put_carbamltrans"/>
</dbReference>
<dbReference type="InterPro" id="IPR024904">
    <property type="entry name" value="OTCase_ArgI"/>
</dbReference>
<dbReference type="NCBIfam" id="TIGR00658">
    <property type="entry name" value="orni_carb_tr"/>
    <property type="match status" value="1"/>
</dbReference>
<dbReference type="NCBIfam" id="NF001986">
    <property type="entry name" value="PRK00779.1"/>
    <property type="match status" value="1"/>
</dbReference>
<dbReference type="NCBIfam" id="NF003286">
    <property type="entry name" value="PRK04284.1"/>
    <property type="match status" value="1"/>
</dbReference>
<dbReference type="PANTHER" id="PTHR45753:SF2">
    <property type="entry name" value="ORNITHINE CARBAMOYLTRANSFERASE"/>
    <property type="match status" value="1"/>
</dbReference>
<dbReference type="PANTHER" id="PTHR45753">
    <property type="entry name" value="ORNITHINE CARBAMOYLTRANSFERASE, MITOCHONDRIAL"/>
    <property type="match status" value="1"/>
</dbReference>
<dbReference type="Pfam" id="PF00185">
    <property type="entry name" value="OTCace"/>
    <property type="match status" value="1"/>
</dbReference>
<dbReference type="Pfam" id="PF02729">
    <property type="entry name" value="OTCace_N"/>
    <property type="match status" value="1"/>
</dbReference>
<dbReference type="PRINTS" id="PR00100">
    <property type="entry name" value="AOTCASE"/>
</dbReference>
<dbReference type="PRINTS" id="PR00102">
    <property type="entry name" value="OTCASE"/>
</dbReference>
<dbReference type="SUPFAM" id="SSF53671">
    <property type="entry name" value="Aspartate/ornithine carbamoyltransferase"/>
    <property type="match status" value="1"/>
</dbReference>
<dbReference type="PROSITE" id="PS00097">
    <property type="entry name" value="CARBAMOYLTRANSFERASE"/>
    <property type="match status" value="1"/>
</dbReference>
<keyword id="KW-0056">Arginine metabolism</keyword>
<keyword id="KW-0963">Cytoplasm</keyword>
<keyword id="KW-1185">Reference proteome</keyword>
<keyword id="KW-0808">Transferase</keyword>
<gene>
    <name type="primary">arcB1</name>
    <name type="ordered locus">SAG2126</name>
</gene>
<organism>
    <name type="scientific">Streptococcus agalactiae serotype V (strain ATCC BAA-611 / 2603 V/R)</name>
    <dbReference type="NCBI Taxonomy" id="208435"/>
    <lineage>
        <taxon>Bacteria</taxon>
        <taxon>Bacillati</taxon>
        <taxon>Bacillota</taxon>
        <taxon>Bacilli</taxon>
        <taxon>Lactobacillales</taxon>
        <taxon>Streptococcaceae</taxon>
        <taxon>Streptococcus</taxon>
    </lineage>
</organism>
<sequence length="332" mass="37220">MKNLRNRSFLTLLDFSTAEVEFLLKLSEDLKRAKYAGIEQQKLVGKNIALIFEKDSTRTRCAFEVAAHDQGAHVTYLGPTGSQMGKKETSKDTARVLGGMYDGIEYRGFSQETVETLAEFSGVPVWNGLTDADHPTQVLADFLTAKECLHKPYKDIRFTYVGDGRNNVANALMIGASIVGMTYHLVCPKELEPDPELLSKCQEIAKTTGASIEITADIAEGVRDSDVLYTDVWVSMGEPDEVWKERIALLEPYRITQEMLNMTENPNVIFEHCLPSFHNIDTKVGYDIYEKYGLKEMEVSDEVFEGPHSVVFQEAENRMHTIKAVMVATLGD</sequence>
<name>OTCC1_STRA5</name>
<reference key="1">
    <citation type="journal article" date="2002" name="Proc. Natl. Acad. Sci. U.S.A.">
        <title>Complete genome sequence and comparative genomic analysis of an emerging human pathogen, serotype V Streptococcus agalactiae.</title>
        <authorList>
            <person name="Tettelin H."/>
            <person name="Masignani V."/>
            <person name="Cieslewicz M.J."/>
            <person name="Eisen J.A."/>
            <person name="Peterson S.N."/>
            <person name="Wessels M.R."/>
            <person name="Paulsen I.T."/>
            <person name="Nelson K.E."/>
            <person name="Margarit I."/>
            <person name="Read T.D."/>
            <person name="Madoff L.C."/>
            <person name="Wolf A.M."/>
            <person name="Beanan M.J."/>
            <person name="Brinkac L.M."/>
            <person name="Daugherty S.C."/>
            <person name="DeBoy R.T."/>
            <person name="Durkin A.S."/>
            <person name="Kolonay J.F."/>
            <person name="Madupu R."/>
            <person name="Lewis M.R."/>
            <person name="Radune D."/>
            <person name="Fedorova N.B."/>
            <person name="Scanlan D."/>
            <person name="Khouri H.M."/>
            <person name="Mulligan S."/>
            <person name="Carty H.A."/>
            <person name="Cline R.T."/>
            <person name="Van Aken S.E."/>
            <person name="Gill J."/>
            <person name="Scarselli M."/>
            <person name="Mora M."/>
            <person name="Iacobini E.T."/>
            <person name="Brettoni C."/>
            <person name="Galli G."/>
            <person name="Mariani M."/>
            <person name="Vegni F."/>
            <person name="Maione D."/>
            <person name="Rinaudo D."/>
            <person name="Rappuoli R."/>
            <person name="Telford J.L."/>
            <person name="Kasper D.L."/>
            <person name="Grandi G."/>
            <person name="Fraser C.M."/>
        </authorList>
    </citation>
    <scope>NUCLEOTIDE SEQUENCE [LARGE SCALE GENOMIC DNA]</scope>
    <source>
        <strain>ATCC BAA-611 / 2603 V/R</strain>
    </source>
</reference>
<protein>
    <recommendedName>
        <fullName>Ornithine carbamoyltransferase 1, catabolic</fullName>
        <shortName>OTCase 1</shortName>
        <ecNumber>2.1.3.3</ecNumber>
    </recommendedName>
</protein>
<evidence type="ECO:0000250" key="1"/>
<evidence type="ECO:0000255" key="2">
    <source>
        <dbReference type="HAMAP-Rule" id="MF_01109"/>
    </source>
</evidence>
<evidence type="ECO:0000305" key="3"/>
<accession>P65604</accession>
<accession>Q8DWT7</accession>
<accession>Q8E2N7</accession>
<comment type="function">
    <text evidence="1">Reversibly catalyzes the transfer of the carbamoyl group from carbamoyl phosphate (CP) to the N(epsilon) atom of ornithine (ORN) to produce L-citrulline.</text>
</comment>
<comment type="catalytic activity">
    <reaction>
        <text>carbamoyl phosphate + L-ornithine = L-citrulline + phosphate + H(+)</text>
        <dbReference type="Rhea" id="RHEA:19513"/>
        <dbReference type="ChEBI" id="CHEBI:15378"/>
        <dbReference type="ChEBI" id="CHEBI:43474"/>
        <dbReference type="ChEBI" id="CHEBI:46911"/>
        <dbReference type="ChEBI" id="CHEBI:57743"/>
        <dbReference type="ChEBI" id="CHEBI:58228"/>
        <dbReference type="EC" id="2.1.3.3"/>
    </reaction>
</comment>
<comment type="pathway">
    <text>Amino-acid degradation; L-arginine degradation via ADI pathway; carbamoyl phosphate from L-arginine: step 2/2.</text>
</comment>
<comment type="subcellular location">
    <subcellularLocation>
        <location evidence="1">Cytoplasm</location>
    </subcellularLocation>
</comment>
<comment type="similarity">
    <text evidence="3">Belongs to the aspartate/ornithine carbamoyltransferase superfamily. OTCase family.</text>
</comment>